<feature type="chain" id="PRO_1000088207" description="D-erythrose-4-phosphate dehydrogenase">
    <location>
        <begin position="1"/>
        <end position="342"/>
    </location>
</feature>
<feature type="active site" description="Nucleophile" evidence="1">
    <location>
        <position position="155"/>
    </location>
</feature>
<feature type="binding site" evidence="1">
    <location>
        <begin position="12"/>
        <end position="13"/>
    </location>
    <ligand>
        <name>NAD(+)</name>
        <dbReference type="ChEBI" id="CHEBI:57540"/>
    </ligand>
</feature>
<feature type="binding site" evidence="1">
    <location>
        <begin position="154"/>
        <end position="156"/>
    </location>
    <ligand>
        <name>substrate</name>
    </ligand>
</feature>
<feature type="binding site" evidence="1">
    <location>
        <position position="200"/>
    </location>
    <ligand>
        <name>substrate</name>
    </ligand>
</feature>
<feature type="binding site" evidence="1">
    <location>
        <begin position="213"/>
        <end position="214"/>
    </location>
    <ligand>
        <name>substrate</name>
    </ligand>
</feature>
<feature type="binding site" evidence="1">
    <location>
        <position position="236"/>
    </location>
    <ligand>
        <name>substrate</name>
    </ligand>
</feature>
<feature type="binding site" evidence="1">
    <location>
        <position position="318"/>
    </location>
    <ligand>
        <name>NAD(+)</name>
        <dbReference type="ChEBI" id="CHEBI:57540"/>
    </ligand>
</feature>
<feature type="site" description="Activates thiol group during catalysis" evidence="1">
    <location>
        <position position="182"/>
    </location>
</feature>
<evidence type="ECO:0000255" key="1">
    <source>
        <dbReference type="HAMAP-Rule" id="MF_01640"/>
    </source>
</evidence>
<protein>
    <recommendedName>
        <fullName evidence="1">D-erythrose-4-phosphate dehydrogenase</fullName>
        <shortName evidence="1">E4PDH</shortName>
        <ecNumber evidence="1">1.2.1.72</ecNumber>
    </recommendedName>
</protein>
<accession>A9MRF0</accession>
<organism>
    <name type="scientific">Salmonella arizonae (strain ATCC BAA-731 / CDC346-86 / RSK2980)</name>
    <dbReference type="NCBI Taxonomy" id="41514"/>
    <lineage>
        <taxon>Bacteria</taxon>
        <taxon>Pseudomonadati</taxon>
        <taxon>Pseudomonadota</taxon>
        <taxon>Gammaproteobacteria</taxon>
        <taxon>Enterobacterales</taxon>
        <taxon>Enterobacteriaceae</taxon>
        <taxon>Salmonella</taxon>
    </lineage>
</organism>
<comment type="function">
    <text evidence="1">Catalyzes the NAD-dependent conversion of D-erythrose 4-phosphate to 4-phosphoerythronate.</text>
</comment>
<comment type="catalytic activity">
    <reaction evidence="1">
        <text>D-erythrose 4-phosphate + NAD(+) + H2O = 4-phospho-D-erythronate + NADH + 2 H(+)</text>
        <dbReference type="Rhea" id="RHEA:12056"/>
        <dbReference type="ChEBI" id="CHEBI:15377"/>
        <dbReference type="ChEBI" id="CHEBI:15378"/>
        <dbReference type="ChEBI" id="CHEBI:16897"/>
        <dbReference type="ChEBI" id="CHEBI:57540"/>
        <dbReference type="ChEBI" id="CHEBI:57945"/>
        <dbReference type="ChEBI" id="CHEBI:58766"/>
        <dbReference type="EC" id="1.2.1.72"/>
    </reaction>
</comment>
<comment type="pathway">
    <text evidence="1">Cofactor biosynthesis; pyridoxine 5'-phosphate biosynthesis; pyridoxine 5'-phosphate from D-erythrose 4-phosphate: step 1/5.</text>
</comment>
<comment type="subunit">
    <text evidence="1">Homotetramer.</text>
</comment>
<comment type="subcellular location">
    <subcellularLocation>
        <location evidence="1">Cytoplasm</location>
    </subcellularLocation>
</comment>
<comment type="similarity">
    <text evidence="1">Belongs to the glyceraldehyde-3-phosphate dehydrogenase family. Epd subfamily.</text>
</comment>
<name>E4PD_SALAR</name>
<proteinExistence type="inferred from homology"/>
<dbReference type="EC" id="1.2.1.72" evidence="1"/>
<dbReference type="EMBL" id="CP000880">
    <property type="protein sequence ID" value="ABX24348.1"/>
    <property type="molecule type" value="Genomic_DNA"/>
</dbReference>
<dbReference type="SMR" id="A9MRF0"/>
<dbReference type="STRING" id="41514.SARI_04575"/>
<dbReference type="KEGG" id="ses:SARI_04575"/>
<dbReference type="HOGENOM" id="CLU_030140_0_2_6"/>
<dbReference type="UniPathway" id="UPA00244">
    <property type="reaction ID" value="UER00309"/>
</dbReference>
<dbReference type="Proteomes" id="UP000002084">
    <property type="component" value="Chromosome"/>
</dbReference>
<dbReference type="GO" id="GO:0005737">
    <property type="term" value="C:cytoplasm"/>
    <property type="evidence" value="ECO:0007669"/>
    <property type="project" value="UniProtKB-SubCell"/>
</dbReference>
<dbReference type="GO" id="GO:0048001">
    <property type="term" value="F:erythrose-4-phosphate dehydrogenase activity"/>
    <property type="evidence" value="ECO:0007669"/>
    <property type="project" value="UniProtKB-UniRule"/>
</dbReference>
<dbReference type="GO" id="GO:0051287">
    <property type="term" value="F:NAD binding"/>
    <property type="evidence" value="ECO:0007669"/>
    <property type="project" value="InterPro"/>
</dbReference>
<dbReference type="GO" id="GO:0050661">
    <property type="term" value="F:NADP binding"/>
    <property type="evidence" value="ECO:0007669"/>
    <property type="project" value="InterPro"/>
</dbReference>
<dbReference type="GO" id="GO:0006006">
    <property type="term" value="P:glucose metabolic process"/>
    <property type="evidence" value="ECO:0007669"/>
    <property type="project" value="InterPro"/>
</dbReference>
<dbReference type="GO" id="GO:0042823">
    <property type="term" value="P:pyridoxal phosphate biosynthetic process"/>
    <property type="evidence" value="ECO:0007669"/>
    <property type="project" value="UniProtKB-UniRule"/>
</dbReference>
<dbReference type="GO" id="GO:0008615">
    <property type="term" value="P:pyridoxine biosynthetic process"/>
    <property type="evidence" value="ECO:0007669"/>
    <property type="project" value="UniProtKB-UniRule"/>
</dbReference>
<dbReference type="CDD" id="cd23937">
    <property type="entry name" value="GAPDH_C_E4PDH"/>
    <property type="match status" value="1"/>
</dbReference>
<dbReference type="CDD" id="cd17892">
    <property type="entry name" value="GAPDH_N_E4PDH"/>
    <property type="match status" value="1"/>
</dbReference>
<dbReference type="FunFam" id="3.30.360.10:FF:000007">
    <property type="entry name" value="D-erythrose-4-phosphate dehydrogenase"/>
    <property type="match status" value="1"/>
</dbReference>
<dbReference type="FunFam" id="3.40.50.720:FF:000001">
    <property type="entry name" value="Glyceraldehyde-3-phosphate dehydrogenase"/>
    <property type="match status" value="1"/>
</dbReference>
<dbReference type="Gene3D" id="3.30.360.10">
    <property type="entry name" value="Dihydrodipicolinate Reductase, domain 2"/>
    <property type="match status" value="1"/>
</dbReference>
<dbReference type="Gene3D" id="3.40.50.720">
    <property type="entry name" value="NAD(P)-binding Rossmann-like Domain"/>
    <property type="match status" value="1"/>
</dbReference>
<dbReference type="HAMAP" id="MF_01640">
    <property type="entry name" value="E4P_dehydrog"/>
    <property type="match status" value="1"/>
</dbReference>
<dbReference type="InterPro" id="IPR006422">
    <property type="entry name" value="E4P_DH_bac"/>
</dbReference>
<dbReference type="InterPro" id="IPR020831">
    <property type="entry name" value="GlycerAld/Erythrose_P_DH"/>
</dbReference>
<dbReference type="InterPro" id="IPR020830">
    <property type="entry name" value="GlycerAld_3-P_DH_AS"/>
</dbReference>
<dbReference type="InterPro" id="IPR020829">
    <property type="entry name" value="GlycerAld_3-P_DH_cat"/>
</dbReference>
<dbReference type="InterPro" id="IPR020828">
    <property type="entry name" value="GlycerAld_3-P_DH_NAD(P)-bd"/>
</dbReference>
<dbReference type="InterPro" id="IPR006424">
    <property type="entry name" value="Glyceraldehyde-3-P_DH_1"/>
</dbReference>
<dbReference type="InterPro" id="IPR036291">
    <property type="entry name" value="NAD(P)-bd_dom_sf"/>
</dbReference>
<dbReference type="NCBIfam" id="TIGR01532">
    <property type="entry name" value="E4PD_g-proteo"/>
    <property type="match status" value="1"/>
</dbReference>
<dbReference type="NCBIfam" id="TIGR01534">
    <property type="entry name" value="GAPDH-I"/>
    <property type="match status" value="1"/>
</dbReference>
<dbReference type="NCBIfam" id="NF010058">
    <property type="entry name" value="PRK13535.1"/>
    <property type="match status" value="1"/>
</dbReference>
<dbReference type="PANTHER" id="PTHR43148">
    <property type="entry name" value="GLYCERALDEHYDE-3-PHOSPHATE DEHYDROGENASE 2"/>
    <property type="match status" value="1"/>
</dbReference>
<dbReference type="Pfam" id="PF02800">
    <property type="entry name" value="Gp_dh_C"/>
    <property type="match status" value="1"/>
</dbReference>
<dbReference type="Pfam" id="PF00044">
    <property type="entry name" value="Gp_dh_N"/>
    <property type="match status" value="1"/>
</dbReference>
<dbReference type="PIRSF" id="PIRSF000149">
    <property type="entry name" value="GAP_DH"/>
    <property type="match status" value="1"/>
</dbReference>
<dbReference type="PRINTS" id="PR00078">
    <property type="entry name" value="G3PDHDRGNASE"/>
</dbReference>
<dbReference type="SMART" id="SM00846">
    <property type="entry name" value="Gp_dh_N"/>
    <property type="match status" value="1"/>
</dbReference>
<dbReference type="SUPFAM" id="SSF55347">
    <property type="entry name" value="Glyceraldehyde-3-phosphate dehydrogenase-like, C-terminal domain"/>
    <property type="match status" value="1"/>
</dbReference>
<dbReference type="SUPFAM" id="SSF51735">
    <property type="entry name" value="NAD(P)-binding Rossmann-fold domains"/>
    <property type="match status" value="1"/>
</dbReference>
<dbReference type="PROSITE" id="PS00071">
    <property type="entry name" value="GAPDH"/>
    <property type="match status" value="1"/>
</dbReference>
<gene>
    <name evidence="1" type="primary">epd</name>
    <name type="ordered locus">SARI_04575</name>
</gene>
<keyword id="KW-0963">Cytoplasm</keyword>
<keyword id="KW-0520">NAD</keyword>
<keyword id="KW-0560">Oxidoreductase</keyword>
<keyword id="KW-0664">Pyridoxine biosynthesis</keyword>
<keyword id="KW-1185">Reference proteome</keyword>
<sequence length="342" mass="37550">MTVRVAINGFGRIGRNVVRALYESGRRAEITVVAINELADAAGMAHLLKYDTSHGRFAWEVRHEREQLFVGDDVIRILHEQTLADLPWRELGVDVVLDCTGVYGNREHGEAHIAAGAKKVLFSHPGSNDLDATVVFGVNQNQLRAEHRIVSNASCTTNCIIPVIKLLDDAYGIESGTVTTIHSAMNDQQVIDAYHPDLRRTRAASQSIIPVDTKLAAGITRIFPQFNDRFEAIAVRVPTINVTAIDLSVTVKKPIKASEVNQLLQKAAQGAFHGIVDYTESPLVSIDFNHDPHSAIVDGTQTRVSGAHLIKTLVWCDNEWGFANRMLDTTLAMAAVGFRLDT</sequence>
<reference key="1">
    <citation type="submission" date="2007-11" db="EMBL/GenBank/DDBJ databases">
        <authorList>
            <consortium name="The Salmonella enterica serovar Arizonae Genome Sequencing Project"/>
            <person name="McClelland M."/>
            <person name="Sanderson E.K."/>
            <person name="Porwollik S."/>
            <person name="Spieth J."/>
            <person name="Clifton W.S."/>
            <person name="Fulton R."/>
            <person name="Chunyan W."/>
            <person name="Wollam A."/>
            <person name="Shah N."/>
            <person name="Pepin K."/>
            <person name="Bhonagiri V."/>
            <person name="Nash W."/>
            <person name="Johnson M."/>
            <person name="Thiruvilangam P."/>
            <person name="Wilson R."/>
        </authorList>
    </citation>
    <scope>NUCLEOTIDE SEQUENCE [LARGE SCALE GENOMIC DNA]</scope>
    <source>
        <strain>ATCC BAA-731 / CDC346-86 / RSK2980</strain>
    </source>
</reference>